<proteinExistence type="evidence at protein level"/>
<organism>
    <name type="scientific">Enterobacteria phage T4</name>
    <name type="common">Bacteriophage T4</name>
    <dbReference type="NCBI Taxonomy" id="10665"/>
    <lineage>
        <taxon>Viruses</taxon>
        <taxon>Duplodnaviria</taxon>
        <taxon>Heunggongvirae</taxon>
        <taxon>Uroviricota</taxon>
        <taxon>Caudoviricetes</taxon>
        <taxon>Straboviridae</taxon>
        <taxon>Tevenvirinae</taxon>
        <taxon>Tequatrovirus</taxon>
    </lineage>
</organism>
<dbReference type="EC" id="2.4.2.31" evidence="1 2 3"/>
<dbReference type="EMBL" id="X98695">
    <property type="protein sequence ID" value="CAA67255.1"/>
    <property type="molecule type" value="Genomic_DNA"/>
</dbReference>
<dbReference type="EMBL" id="M30001">
    <property type="protein sequence ID" value="AAB07802.1"/>
    <property type="molecule type" value="Genomic_DNA"/>
</dbReference>
<dbReference type="EMBL" id="AF158101">
    <property type="protein sequence ID" value="AAD42601.1"/>
    <property type="molecule type" value="Genomic_DNA"/>
</dbReference>
<dbReference type="PIR" id="T10143">
    <property type="entry name" value="T10143"/>
</dbReference>
<dbReference type="RefSeq" id="NP_049635.1">
    <property type="nucleotide sequence ID" value="NC_000866.4"/>
</dbReference>
<dbReference type="GeneID" id="1258568"/>
<dbReference type="KEGG" id="vg:1258568"/>
<dbReference type="OrthoDB" id="8192at10239"/>
<dbReference type="Proteomes" id="UP000009087">
    <property type="component" value="Segment"/>
</dbReference>
<dbReference type="GO" id="GO:0044423">
    <property type="term" value="C:virion component"/>
    <property type="evidence" value="ECO:0007669"/>
    <property type="project" value="UniProtKB-UniRule"/>
</dbReference>
<dbReference type="GO" id="GO:1990404">
    <property type="term" value="F:NAD+-protein mono-ADP-ribosyltransferase activity"/>
    <property type="evidence" value="ECO:0000314"/>
    <property type="project" value="CACAO"/>
</dbReference>
<dbReference type="GO" id="GO:0106274">
    <property type="term" value="F:NAD+-protein-arginine ADP-ribosyltransferase activity"/>
    <property type="evidence" value="ECO:0000314"/>
    <property type="project" value="UniProtKB"/>
</dbReference>
<dbReference type="Gene3D" id="3.90.176.10">
    <property type="entry name" value="Toxin ADP-ribosyltransferase, Chain A, domain 1"/>
    <property type="match status" value="1"/>
</dbReference>
<dbReference type="HAMAP" id="MF_04141">
    <property type="entry name" value="MODA_T4"/>
    <property type="match status" value="1"/>
</dbReference>
<dbReference type="InterPro" id="IPR043663">
    <property type="entry name" value="MODA-like"/>
</dbReference>
<dbReference type="SUPFAM" id="SSF56399">
    <property type="entry name" value="ADP-ribosylation"/>
    <property type="match status" value="1"/>
</dbReference>
<organismHost>
    <name type="scientific">Escherichia coli</name>
    <dbReference type="NCBI Taxonomy" id="562"/>
</organismHost>
<reference key="1">
    <citation type="journal article" date="1997" name="Adv. Exp. Med. Biol.">
        <title>ADP-ribosylation and early transcription regulation by bacteriophage T4.</title>
        <authorList>
            <person name="Wilkens K."/>
            <person name="Tiemann B."/>
            <person name="Bazan J.F."/>
            <person name="Rueger W."/>
        </authorList>
    </citation>
    <scope>NUCLEOTIDE SEQUENCE [GENOMIC DNA]</scope>
</reference>
<reference key="2">
    <citation type="journal article" date="2003" name="Microbiol. Mol. Biol. Rev.">
        <title>Bacteriophage T4 genome.</title>
        <authorList>
            <person name="Miller E.S."/>
            <person name="Kutter E."/>
            <person name="Mosig G."/>
            <person name="Arisaka F."/>
            <person name="Kunisawa T."/>
            <person name="Ruger W."/>
        </authorList>
    </citation>
    <scope>NUCLEOTIDE SEQUENCE [LARGE SCALE GENOMIC DNA]</scope>
</reference>
<reference key="3">
    <citation type="journal article" date="1981" name="Nucleic Acids Res.">
        <title>Control of promoter utilization by bacteriophage T4-induced modification of RNA polymerase alpha subunit.</title>
        <authorList>
            <person name="Goldfarb A."/>
            <person name="Palm P."/>
        </authorList>
    </citation>
    <scope>FUNCTION</scope>
</reference>
<reference key="4">
    <citation type="journal article" date="1999" name="Gene Expr.">
        <title>Overexpression, purification, and partial characterization of ADP-ribosyltransferases modA and modB of bacteriophage T4.</title>
        <authorList>
            <person name="Tiemann B."/>
            <person name="Depping R."/>
            <person name="Rueger W."/>
        </authorList>
    </citation>
    <scope>FUNCTION</scope>
    <scope>CATALYTIC ACTIVITY</scope>
</reference>
<reference key="5">
    <citation type="journal article" date="2004" name="J. Bacteriol.">
        <title>ModA and ModB, two ADP-ribosyltransferases encoded by bacteriophage T4: catalytic properties and mutation analysis.</title>
        <authorList>
            <person name="Tiemann B."/>
            <person name="Depping R."/>
            <person name="Gineikiene E."/>
            <person name="Kaliniene L."/>
            <person name="Nivinskas R."/>
            <person name="Ruger W."/>
        </authorList>
    </citation>
    <scope>FUNCTION</scope>
    <scope>CATALYTIC ACTIVITY</scope>
    <scope>MUTAGENESIS OF ARG-72; SER-109; GLN-116; PHE-127; ASN-128; PHE-129; GLU-163; GLN-164 AND GLU-165</scope>
    <scope>ACTIVE SITE</scope>
</reference>
<gene>
    <name evidence="1" type="primary">modA</name>
</gene>
<accession>P39421</accession>
<protein>
    <recommendedName>
        <fullName evidence="1">NAD--protein ADP-ribosyltransferase modA</fullName>
        <ecNumber evidence="1 2 3">2.4.2.31</ecNumber>
    </recommendedName>
    <alternativeName>
        <fullName evidence="1">RNA polymerase ADP-ribosylase modA</fullName>
    </alternativeName>
</protein>
<evidence type="ECO:0000255" key="1">
    <source>
        <dbReference type="HAMAP-Rule" id="MF_04141"/>
    </source>
</evidence>
<evidence type="ECO:0000269" key="2">
    <source>
    </source>
</evidence>
<evidence type="ECO:0000269" key="3">
    <source>
    </source>
</evidence>
<evidence type="ECO:0000269" key="4">
    <source>
    </source>
</evidence>
<keyword id="KW-0328">Glycosyltransferase</keyword>
<keyword id="KW-1185">Reference proteome</keyword>
<keyword id="KW-0808">Transferase</keyword>
<keyword id="KW-0946">Virion</keyword>
<sequence>MKYSVMQLKDFKIKSMDASVRASIREELLSEGFNLSEIELLIHCITNKPDDHSWLNEIIKSRLVPNDKPLWRGVPAETKQVLNQGIDIITFDKVVSASYDKNIALHFASGLEYNTQVIFEFKAPMVFNFQEYAIKALRCKEYNPNFKFPDSHRYRNMELVSDEQEVMIPAGSVFRIADRYEYKKCSTYTIYTLDFEGFNL</sequence>
<name>MODA_BPT4</name>
<comment type="function">
    <text evidence="1 2 3 4">ADP-ribosyltransferase that efficiently ADP-ribosylates both alpha subunits of host RNA polymerase RPOA (PubMed:10634320, PubMed:15489438). The ModA-induced ADP-ribosylation of RPOA alpha subunits inhibits transcription from viral early promoters (PubMed:7031602).</text>
</comment>
<comment type="catalytic activity">
    <reaction evidence="1 2 3">
        <text>L-arginyl-[protein] + NAD(+) = N(omega)-(ADP-D-ribosyl)-L-arginyl-[protein] + nicotinamide + H(+)</text>
        <dbReference type="Rhea" id="RHEA:19149"/>
        <dbReference type="Rhea" id="RHEA-COMP:10532"/>
        <dbReference type="Rhea" id="RHEA-COMP:15087"/>
        <dbReference type="ChEBI" id="CHEBI:15378"/>
        <dbReference type="ChEBI" id="CHEBI:17154"/>
        <dbReference type="ChEBI" id="CHEBI:29965"/>
        <dbReference type="ChEBI" id="CHEBI:57540"/>
        <dbReference type="ChEBI" id="CHEBI:142554"/>
        <dbReference type="EC" id="2.4.2.31"/>
    </reaction>
</comment>
<comment type="subcellular location">
    <subcellularLocation>
        <location evidence="1">Virion</location>
    </subcellularLocation>
    <text evidence="1">This protein is injected from the virion into the bacterial cell.</text>
</comment>
<comment type="similarity">
    <text evidence="1">Belongs to the Tevenvirinae NAD--protein ADP-ribosyltransferase modA family.</text>
</comment>
<feature type="chain" id="PRO_0000164955" description="NAD--protein ADP-ribosyltransferase modA">
    <location>
        <begin position="1"/>
        <end position="200"/>
    </location>
</feature>
<feature type="active site" evidence="1 3">
    <location>
        <position position="165"/>
    </location>
</feature>
<feature type="binding site" evidence="1 3">
    <location>
        <position position="72"/>
    </location>
    <ligand>
        <name>NAD(+)</name>
        <dbReference type="ChEBI" id="CHEBI:57540"/>
    </ligand>
</feature>
<feature type="mutagenesis site" description="Complete loss of enzymatic activity in vitro." evidence="3">
    <original>R</original>
    <variation>A</variation>
    <location>
        <position position="72"/>
    </location>
</feature>
<feature type="mutagenesis site" description="Complete loss of enzymatic activity in vitro." evidence="3">
    <original>S</original>
    <variation>A</variation>
    <location>
        <position position="109"/>
    </location>
</feature>
<feature type="mutagenesis site" description="No effect on enzymatic activity in vitro." evidence="3">
    <original>Q</original>
    <variation>A</variation>
    <location>
        <position position="116"/>
    </location>
</feature>
<feature type="mutagenesis site" description="Complete loss of enzymatic activity in vitro." evidence="3">
    <original>F</original>
    <variation>A</variation>
    <location>
        <position position="127"/>
    </location>
</feature>
<feature type="mutagenesis site" description="No effect on enzymatic activity in vitro." evidence="3">
    <original>N</original>
    <variation>A</variation>
    <location>
        <position position="128"/>
    </location>
</feature>
<feature type="mutagenesis site" description="Complete loss of enzymatic activity in vitro." evidence="3">
    <original>F</original>
    <variation>A</variation>
    <location>
        <position position="129"/>
    </location>
</feature>
<feature type="mutagenesis site" description="Complete loss of enzymatic activity in vitro." evidence="3">
    <original>E</original>
    <variation>A</variation>
    <location>
        <position position="163"/>
    </location>
</feature>
<feature type="mutagenesis site" description="No effect on enzymatic activity in vitro." evidence="3">
    <original>Q</original>
    <variation>A</variation>
    <location>
        <position position="164"/>
    </location>
</feature>
<feature type="mutagenesis site" description="Complete loss of enzymatic activity in vitro." evidence="3">
    <original>E</original>
    <variation>A</variation>
    <location>
        <position position="165"/>
    </location>
</feature>